<dbReference type="EMBL" id="AE004091">
    <property type="protein sequence ID" value="AAG05708.1"/>
    <property type="molecule type" value="Genomic_DNA"/>
</dbReference>
<dbReference type="PIR" id="C83355">
    <property type="entry name" value="C83355"/>
</dbReference>
<dbReference type="RefSeq" id="NP_251010.1">
    <property type="nucleotide sequence ID" value="NC_002516.2"/>
</dbReference>
<dbReference type="RefSeq" id="WP_003107131.1">
    <property type="nucleotide sequence ID" value="NZ_QZGE01000021.1"/>
</dbReference>
<dbReference type="SMR" id="Q9I1F6"/>
<dbReference type="FunCoup" id="Q9I1F6">
    <property type="interactions" value="28"/>
</dbReference>
<dbReference type="STRING" id="208964.PA2320"/>
<dbReference type="PaxDb" id="208964-PA2320"/>
<dbReference type="GeneID" id="883124"/>
<dbReference type="KEGG" id="pae:PA2320"/>
<dbReference type="PATRIC" id="fig|208964.12.peg.2425"/>
<dbReference type="PseudoCAP" id="PA2320"/>
<dbReference type="HOGENOM" id="CLU_037628_6_3_6"/>
<dbReference type="InParanoid" id="Q9I1F6"/>
<dbReference type="OrthoDB" id="5681588at2"/>
<dbReference type="PhylomeDB" id="Q9I1F6"/>
<dbReference type="BioCyc" id="PAER208964:G1FZ6-2359-MONOMER"/>
<dbReference type="Proteomes" id="UP000002438">
    <property type="component" value="Chromosome"/>
</dbReference>
<dbReference type="GO" id="GO:0003700">
    <property type="term" value="F:DNA-binding transcription factor activity"/>
    <property type="evidence" value="ECO:0000314"/>
    <property type="project" value="PseudoCAP"/>
</dbReference>
<dbReference type="GO" id="GO:0000976">
    <property type="term" value="F:transcription cis-regulatory region binding"/>
    <property type="evidence" value="ECO:0000318"/>
    <property type="project" value="GO_Central"/>
</dbReference>
<dbReference type="GO" id="GO:0006355">
    <property type="term" value="P:regulation of DNA-templated transcription"/>
    <property type="evidence" value="ECO:0000318"/>
    <property type="project" value="GO_Central"/>
</dbReference>
<dbReference type="GO" id="GO:0010906">
    <property type="term" value="P:regulation of glucose metabolic process"/>
    <property type="evidence" value="ECO:0000315"/>
    <property type="project" value="PseudoCAP"/>
</dbReference>
<dbReference type="CDD" id="cd01392">
    <property type="entry name" value="HTH_LacI"/>
    <property type="match status" value="1"/>
</dbReference>
<dbReference type="CDD" id="cd01575">
    <property type="entry name" value="PBP1_GntR"/>
    <property type="match status" value="1"/>
</dbReference>
<dbReference type="FunFam" id="1.10.260.40:FF:000060">
    <property type="entry name" value="LacI family DNA-binding transcriptional regulator"/>
    <property type="match status" value="1"/>
</dbReference>
<dbReference type="Gene3D" id="3.40.50.2300">
    <property type="match status" value="2"/>
</dbReference>
<dbReference type="Gene3D" id="1.10.260.40">
    <property type="entry name" value="lambda repressor-like DNA-binding domains"/>
    <property type="match status" value="1"/>
</dbReference>
<dbReference type="InterPro" id="IPR000843">
    <property type="entry name" value="HTH_LacI"/>
</dbReference>
<dbReference type="InterPro" id="IPR046335">
    <property type="entry name" value="LacI/GalR-like_sensor"/>
</dbReference>
<dbReference type="InterPro" id="IPR010982">
    <property type="entry name" value="Lambda_DNA-bd_dom_sf"/>
</dbReference>
<dbReference type="InterPro" id="IPR028082">
    <property type="entry name" value="Peripla_BP_I"/>
</dbReference>
<dbReference type="PANTHER" id="PTHR30146:SF2">
    <property type="entry name" value="HTH-TYPE TRANSCRIPTIONAL REGULATOR GNTR"/>
    <property type="match status" value="1"/>
</dbReference>
<dbReference type="PANTHER" id="PTHR30146">
    <property type="entry name" value="LACI-RELATED TRANSCRIPTIONAL REPRESSOR"/>
    <property type="match status" value="1"/>
</dbReference>
<dbReference type="Pfam" id="PF00356">
    <property type="entry name" value="LacI"/>
    <property type="match status" value="1"/>
</dbReference>
<dbReference type="Pfam" id="PF13377">
    <property type="entry name" value="Peripla_BP_3"/>
    <property type="match status" value="1"/>
</dbReference>
<dbReference type="SMART" id="SM00354">
    <property type="entry name" value="HTH_LACI"/>
    <property type="match status" value="1"/>
</dbReference>
<dbReference type="SUPFAM" id="SSF47413">
    <property type="entry name" value="lambda repressor-like DNA-binding domains"/>
    <property type="match status" value="1"/>
</dbReference>
<dbReference type="SUPFAM" id="SSF53822">
    <property type="entry name" value="Periplasmic binding protein-like I"/>
    <property type="match status" value="1"/>
</dbReference>
<dbReference type="PROSITE" id="PS00356">
    <property type="entry name" value="HTH_LACI_1"/>
    <property type="match status" value="1"/>
</dbReference>
<dbReference type="PROSITE" id="PS50932">
    <property type="entry name" value="HTH_LACI_2"/>
    <property type="match status" value="1"/>
</dbReference>
<evidence type="ECO:0000255" key="1">
    <source>
        <dbReference type="PROSITE-ProRule" id="PRU00111"/>
    </source>
</evidence>
<evidence type="ECO:0000269" key="2">
    <source>
    </source>
</evidence>
<evidence type="ECO:0000303" key="3">
    <source>
    </source>
</evidence>
<evidence type="ECO:0000305" key="4"/>
<evidence type="ECO:0000312" key="5">
    <source>
        <dbReference type="EMBL" id="AAG05708.1"/>
    </source>
</evidence>
<name>GNTR_PSEAE</name>
<accession>Q9I1F6</accession>
<keyword id="KW-0238">DNA-binding</keyword>
<keyword id="KW-1185">Reference proteome</keyword>
<keyword id="KW-0678">Repressor</keyword>
<keyword id="KW-0804">Transcription</keyword>
<keyword id="KW-0805">Transcription regulation</keyword>
<gene>
    <name evidence="3" type="primary">gntR</name>
    <name evidence="5" type="ordered locus">PA2320</name>
</gene>
<sequence length="343" mass="37148">MSITKNDKNTRTTGRPTLNEVARRAGVSPITASRALRGVASVAEELAQKVRDAARELGYVANPAARALASAQSHSVAVLVPSLANLLFIETLEAIHAVLRPQGLEVLIGNFHYSRNEEEDLIRNYLAYQPRGLLLTGFERTESARRMIEASGIPCVYMMDLDSGSGLNCVGFSQLRAGEAAAEHLLARGRRRLAYIGAQLDQRTLLRGEGFRRALQKAGCYDPGLEILTPRPSSVALGGELFVQLLASQPQVDGVFFCNDDLAQGALLEALRRGVKVPEQIAVLGFNDLPGSDCTVPRLSSIRTPREAIGRRAAEQLLALIAGKEVRDSALDMGFELMAREST</sequence>
<organism>
    <name type="scientific">Pseudomonas aeruginosa (strain ATCC 15692 / DSM 22644 / CIP 104116 / JCM 14847 / LMG 12228 / 1C / PRS 101 / PAO1)</name>
    <dbReference type="NCBI Taxonomy" id="208964"/>
    <lineage>
        <taxon>Bacteria</taxon>
        <taxon>Pseudomonadati</taxon>
        <taxon>Pseudomonadota</taxon>
        <taxon>Gammaproteobacteria</taxon>
        <taxon>Pseudomonadales</taxon>
        <taxon>Pseudomonadaceae</taxon>
        <taxon>Pseudomonas</taxon>
    </lineage>
</organism>
<feature type="chain" id="PRO_0000454758" description="HTH-type transcriptional regulator GntR">
    <location>
        <begin position="1"/>
        <end position="343"/>
    </location>
</feature>
<feature type="domain" description="HTH lacI-type" evidence="1">
    <location>
        <begin position="16"/>
        <end position="70"/>
    </location>
</feature>
<feature type="DNA-binding region" description="H-T-H motif" evidence="1">
    <location>
        <begin position="18"/>
        <end position="37"/>
    </location>
</feature>
<reference key="1">
    <citation type="journal article" date="2000" name="Nature">
        <title>Complete genome sequence of Pseudomonas aeruginosa PAO1, an opportunistic pathogen.</title>
        <authorList>
            <person name="Stover C.K."/>
            <person name="Pham X.-Q.T."/>
            <person name="Erwin A.L."/>
            <person name="Mizoguchi S.D."/>
            <person name="Warrener P."/>
            <person name="Hickey M.J."/>
            <person name="Brinkman F.S.L."/>
            <person name="Hufnagle W.O."/>
            <person name="Kowalik D.J."/>
            <person name="Lagrou M."/>
            <person name="Garber R.L."/>
            <person name="Goltry L."/>
            <person name="Tolentino E."/>
            <person name="Westbrock-Wadman S."/>
            <person name="Yuan Y."/>
            <person name="Brody L.L."/>
            <person name="Coulter S.N."/>
            <person name="Folger K.R."/>
            <person name="Kas A."/>
            <person name="Larbig K."/>
            <person name="Lim R.M."/>
            <person name="Smith K.A."/>
            <person name="Spencer D.H."/>
            <person name="Wong G.K.-S."/>
            <person name="Wu Z."/>
            <person name="Paulsen I.T."/>
            <person name="Reizer J."/>
            <person name="Saier M.H. Jr."/>
            <person name="Hancock R.E.W."/>
            <person name="Lory S."/>
            <person name="Olson M.V."/>
        </authorList>
    </citation>
    <scope>NUCLEOTIDE SEQUENCE [LARGE SCALE GENOMIC DNA]</scope>
    <source>
        <strain>ATCC 15692 / DSM 22644 / CIP 104116 / JCM 14847 / LMG 12228 / 1C / PRS 101 / PAO1</strain>
    </source>
</reference>
<reference key="2">
    <citation type="journal article" date="2017" name="Environ. Microbiol.">
        <title>Identification of GntR as regulator of the glucose metabolism in Pseudomonas aeruginosa.</title>
        <authorList>
            <person name="Daddaoua A."/>
            <person name="Corral-Lugo A."/>
            <person name="Ramos J.L."/>
            <person name="Krell T."/>
        </authorList>
    </citation>
    <scope>FUNCTION</scope>
    <scope>DNA-BINDING</scope>
    <scope>ACTIVITY REGULATION</scope>
    <scope>INDUCTION</scope>
    <source>
        <strain>ATCC 15692 / DSM 22644 / CIP 104116 / JCM 14847 / LMG 12228 / 1C / PRS 101 / PAO1</strain>
    </source>
</reference>
<comment type="function">
    <text evidence="2">Involved in the regulation of glucose metabolism. Represses its own expression as well as that of the gluconate permease GntP (PubMed:28752954). It employs an effector mediated de-repression mechanism: in the absence of ligand, GntR binds to the gntR and gntP promoters and represses their expression. The release of promoter bound GntR is induced by gluconate and 6-phosphogluconate that bind with similar apparent affinities to the GntR/DNA complex. The release of GntR leads to transcription of the genes (PubMed:28752954).</text>
</comment>
<comment type="activity regulation">
    <text evidence="2">Free GntR fails to recognize gluconate and 6-phosphogluconate, whereas the GntR/DNA complexes recognize both ligands. It is therefore likely that GntR DNA binding induces structural changes that permit GntR to recognize effectors.</text>
</comment>
<comment type="induction">
    <text evidence="2">Negatively autoregulated.</text>
</comment>
<proteinExistence type="evidence at protein level"/>
<protein>
    <recommendedName>
        <fullName evidence="4">HTH-type transcriptional regulator GntR</fullName>
    </recommendedName>
</protein>